<name>RXLRU_PHYIT</name>
<sequence>MRAVYILAMACAATLQASSSALPSTKDLNSQVESLVPSDITDSAHVGGVRLLRVEDKEEETEEERGFGGALADGLKKLNPAKAAKKAKEKSCEN</sequence>
<comment type="function">
    <text evidence="3">Effector that enhances P.infestans colonization of Nicotiana benthamiana leaves.</text>
</comment>
<comment type="subcellular location">
    <subcellularLocation>
        <location evidence="3">Secreted</location>
    </subcellularLocation>
    <subcellularLocation>
        <location evidence="3">Host cytoplasm</location>
    </subcellularLocation>
    <subcellularLocation>
        <location evidence="3">Host nucleus</location>
    </subcellularLocation>
</comment>
<comment type="induction">
    <text evidence="2">Expression is induced during host plant infection.</text>
</comment>
<comment type="domain">
    <text evidence="6">The RxLR-dEER motif acts to carry the protein into the host cell cytoplasm through binding to cell surface phosphatidylinositol-3-phosphate.</text>
</comment>
<comment type="similarity">
    <text evidence="5">Belongs to the RxLR effector family.</text>
</comment>
<reference key="1">
    <citation type="journal article" date="2009" name="Nature">
        <title>Genome sequence and analysis of the Irish potato famine pathogen Phytophthora infestans.</title>
        <authorList>
            <consortium name="The Broad Institute Genome Sequencing Platform"/>
            <person name="Haas B.J."/>
            <person name="Kamoun S."/>
            <person name="Zody M.C."/>
            <person name="Jiang R.H."/>
            <person name="Handsaker R.E."/>
            <person name="Cano L.M."/>
            <person name="Grabherr M."/>
            <person name="Kodira C.D."/>
            <person name="Raffaele S."/>
            <person name="Torto-Alalibo T."/>
            <person name="Bozkurt T.O."/>
            <person name="Ah-Fong A.M."/>
            <person name="Alvarado L."/>
            <person name="Anderson V.L."/>
            <person name="Armstrong M.R."/>
            <person name="Avrova A."/>
            <person name="Baxter L."/>
            <person name="Beynon J."/>
            <person name="Boevink P.C."/>
            <person name="Bollmann S.R."/>
            <person name="Bos J.I."/>
            <person name="Bulone V."/>
            <person name="Cai G."/>
            <person name="Cakir C."/>
            <person name="Carrington J.C."/>
            <person name="Chawner M."/>
            <person name="Conti L."/>
            <person name="Costanzo S."/>
            <person name="Ewan R."/>
            <person name="Fahlgren N."/>
            <person name="Fischbach M.A."/>
            <person name="Fugelstad J."/>
            <person name="Gilroy E.M."/>
            <person name="Gnerre S."/>
            <person name="Green P.J."/>
            <person name="Grenville-Briggs L.J."/>
            <person name="Griffith J."/>
            <person name="Grunwald N.J."/>
            <person name="Horn K."/>
            <person name="Horner N.R."/>
            <person name="Hu C.H."/>
            <person name="Huitema E."/>
            <person name="Jeong D.H."/>
            <person name="Jones A.M."/>
            <person name="Jones J.D."/>
            <person name="Jones R.W."/>
            <person name="Karlsson E.K."/>
            <person name="Kunjeti S.G."/>
            <person name="Lamour K."/>
            <person name="Liu Z."/>
            <person name="Ma L."/>
            <person name="Maclean D."/>
            <person name="Chibucos M.C."/>
            <person name="McDonald H."/>
            <person name="McWalters J."/>
            <person name="Meijer H.J."/>
            <person name="Morgan W."/>
            <person name="Morris P.F."/>
            <person name="Munro C.A."/>
            <person name="O'Neill K."/>
            <person name="Ospina-Giraldo M."/>
            <person name="Pinzon A."/>
            <person name="Pritchard L."/>
            <person name="Ramsahoye B."/>
            <person name="Ren Q."/>
            <person name="Restrepo S."/>
            <person name="Roy S."/>
            <person name="Sadanandom A."/>
            <person name="Savidor A."/>
            <person name="Schornack S."/>
            <person name="Schwartz D.C."/>
            <person name="Schumann U.D."/>
            <person name="Schwessinger B."/>
            <person name="Seyer L."/>
            <person name="Sharpe T."/>
            <person name="Silvar C."/>
            <person name="Song J."/>
            <person name="Studholme D.J."/>
            <person name="Sykes S."/>
            <person name="Thines M."/>
            <person name="van de Vondervoort P.J."/>
            <person name="Phuntumart V."/>
            <person name="Wawra S."/>
            <person name="Weide R."/>
            <person name="Win J."/>
            <person name="Young C."/>
            <person name="Zhou S."/>
            <person name="Fry W."/>
            <person name="Meyers B.C."/>
            <person name="van West P."/>
            <person name="Ristaino J."/>
            <person name="Govers F."/>
            <person name="Birch P.R."/>
            <person name="Whisson S.C."/>
            <person name="Judelson H.S."/>
            <person name="Nusbaum C."/>
        </authorList>
    </citation>
    <scope>NUCLEOTIDE SEQUENCE [LARGE SCALE GENOMIC DNA]</scope>
    <scope>INDUCTION</scope>
    <scope>DOMAIN</scope>
    <source>
        <strain>T30-4</strain>
    </source>
</reference>
<reference key="2">
    <citation type="journal article" date="2019" name="J. Exp. Bot.">
        <title>Phytophthora infestans RXLR effectors act in concert at diverse subcellular locations to enhance host colonization.</title>
        <authorList>
            <person name="Wang S."/>
            <person name="McLellan H."/>
            <person name="Bukharova T."/>
            <person name="He Q."/>
            <person name="Murphy F."/>
            <person name="Shi J."/>
            <person name="Sun S."/>
            <person name="van Weymers P."/>
            <person name="Ren Y."/>
            <person name="Thilliez G."/>
            <person name="Wang H."/>
            <person name="Chen X."/>
            <person name="Engelhardt S."/>
            <person name="Vleeshouwers V."/>
            <person name="Gilroy E.M."/>
            <person name="Whisson S.C."/>
            <person name="Hein I."/>
            <person name="Wang X."/>
            <person name="Tian Z."/>
            <person name="Birch P.R.J."/>
            <person name="Boevink P.C."/>
        </authorList>
    </citation>
    <scope>FUNCTION</scope>
    <scope>SUBCELLULAR LOCATION</scope>
</reference>
<accession>D0NS57</accession>
<organism>
    <name type="scientific">Phytophthora infestans (strain T30-4)</name>
    <name type="common">Potato late blight agent</name>
    <dbReference type="NCBI Taxonomy" id="403677"/>
    <lineage>
        <taxon>Eukaryota</taxon>
        <taxon>Sar</taxon>
        <taxon>Stramenopiles</taxon>
        <taxon>Oomycota</taxon>
        <taxon>Peronosporales</taxon>
        <taxon>Peronosporaceae</taxon>
        <taxon>Phytophthora</taxon>
    </lineage>
</organism>
<proteinExistence type="evidence at transcript level"/>
<protein>
    <recommendedName>
        <fullName evidence="4">RxLR effector protein PITG_15972</fullName>
    </recommendedName>
</protein>
<feature type="signal peptide" evidence="1">
    <location>
        <begin position="1"/>
        <end position="21"/>
    </location>
</feature>
<feature type="chain" id="PRO_5003012334" description="RxLR effector protein PITG_15972">
    <location>
        <begin position="22"/>
        <end position="94"/>
    </location>
</feature>
<feature type="short sequence motif" description="RxLR-dEER" evidence="6">
    <location>
        <begin position="50"/>
        <end position="65"/>
    </location>
</feature>
<keyword id="KW-1035">Host cytoplasm</keyword>
<keyword id="KW-1048">Host nucleus</keyword>
<keyword id="KW-1185">Reference proteome</keyword>
<keyword id="KW-0964">Secreted</keyword>
<keyword id="KW-0732">Signal</keyword>
<keyword id="KW-0843">Virulence</keyword>
<dbReference type="EMBL" id="DS028156">
    <property type="protein sequence ID" value="EEY63598.1"/>
    <property type="molecule type" value="Genomic_DNA"/>
</dbReference>
<dbReference type="RefSeq" id="XP_002898185.1">
    <property type="nucleotide sequence ID" value="XM_002898139.1"/>
</dbReference>
<dbReference type="SMR" id="D0NS57"/>
<dbReference type="EnsemblProtists" id="PITG_15972T0">
    <property type="protein sequence ID" value="PITG_15972T0"/>
    <property type="gene ID" value="PITG_15972"/>
</dbReference>
<dbReference type="GeneID" id="9475821"/>
<dbReference type="KEGG" id="pif:PITG_15972"/>
<dbReference type="VEuPathDB" id="FungiDB:PITG_15972"/>
<dbReference type="HOGENOM" id="CLU_138234_1_0_1"/>
<dbReference type="InParanoid" id="D0NS57"/>
<dbReference type="Proteomes" id="UP000006643">
    <property type="component" value="Partially assembled WGS sequence"/>
</dbReference>
<dbReference type="GO" id="GO:0005576">
    <property type="term" value="C:extracellular region"/>
    <property type="evidence" value="ECO:0007669"/>
    <property type="project" value="UniProtKB-SubCell"/>
</dbReference>
<dbReference type="GO" id="GO:0030430">
    <property type="term" value="C:host cell cytoplasm"/>
    <property type="evidence" value="ECO:0007669"/>
    <property type="project" value="UniProtKB-SubCell"/>
</dbReference>
<dbReference type="GO" id="GO:0042025">
    <property type="term" value="C:host cell nucleus"/>
    <property type="evidence" value="ECO:0007669"/>
    <property type="project" value="UniProtKB-SubCell"/>
</dbReference>
<dbReference type="InterPro" id="IPR031825">
    <property type="entry name" value="RXLR"/>
</dbReference>
<dbReference type="Pfam" id="PF16810">
    <property type="entry name" value="RXLR"/>
    <property type="match status" value="1"/>
</dbReference>
<evidence type="ECO:0000255" key="1"/>
<evidence type="ECO:0000269" key="2">
    <source>
    </source>
</evidence>
<evidence type="ECO:0000269" key="3">
    <source>
    </source>
</evidence>
<evidence type="ECO:0000303" key="4">
    <source>
    </source>
</evidence>
<evidence type="ECO:0000305" key="5"/>
<evidence type="ECO:0000305" key="6">
    <source>
    </source>
</evidence>
<gene>
    <name type="ORF">PITG_15972</name>
</gene>